<feature type="chain" id="PRO_1000081267" description="Small ribosomal subunit protein uS7">
    <location>
        <begin position="1"/>
        <end position="156"/>
    </location>
</feature>
<proteinExistence type="inferred from homology"/>
<reference key="1">
    <citation type="journal article" date="2008" name="Proc. Natl. Acad. Sci. U.S.A.">
        <title>Niche adaptation and genome expansion in the chlorophyll d-producing cyanobacterium Acaryochloris marina.</title>
        <authorList>
            <person name="Swingley W.D."/>
            <person name="Chen M."/>
            <person name="Cheung P.C."/>
            <person name="Conrad A.L."/>
            <person name="Dejesa L.C."/>
            <person name="Hao J."/>
            <person name="Honchak B.M."/>
            <person name="Karbach L.E."/>
            <person name="Kurdoglu A."/>
            <person name="Lahiri S."/>
            <person name="Mastrian S.D."/>
            <person name="Miyashita H."/>
            <person name="Page L."/>
            <person name="Ramakrishna P."/>
            <person name="Satoh S."/>
            <person name="Sattley W.M."/>
            <person name="Shimada Y."/>
            <person name="Taylor H.L."/>
            <person name="Tomo T."/>
            <person name="Tsuchiya T."/>
            <person name="Wang Z.T."/>
            <person name="Raymond J."/>
            <person name="Mimuro M."/>
            <person name="Blankenship R.E."/>
            <person name="Touchman J.W."/>
        </authorList>
    </citation>
    <scope>NUCLEOTIDE SEQUENCE [LARGE SCALE GENOMIC DNA]</scope>
    <source>
        <strain>MBIC 11017</strain>
    </source>
</reference>
<protein>
    <recommendedName>
        <fullName evidence="1">Small ribosomal subunit protein uS7</fullName>
    </recommendedName>
    <alternativeName>
        <fullName evidence="2">30S ribosomal protein S7</fullName>
    </alternativeName>
</protein>
<keyword id="KW-1185">Reference proteome</keyword>
<keyword id="KW-0687">Ribonucleoprotein</keyword>
<keyword id="KW-0689">Ribosomal protein</keyword>
<keyword id="KW-0694">RNA-binding</keyword>
<keyword id="KW-0699">rRNA-binding</keyword>
<keyword id="KW-0820">tRNA-binding</keyword>
<evidence type="ECO:0000255" key="1">
    <source>
        <dbReference type="HAMAP-Rule" id="MF_00480"/>
    </source>
</evidence>
<evidence type="ECO:0000305" key="2"/>
<dbReference type="EMBL" id="CP000828">
    <property type="protein sequence ID" value="ABW26817.1"/>
    <property type="molecule type" value="Genomic_DNA"/>
</dbReference>
<dbReference type="RefSeq" id="WP_012162326.1">
    <property type="nucleotide sequence ID" value="NC_009925.1"/>
</dbReference>
<dbReference type="SMR" id="B0CCD2"/>
<dbReference type="STRING" id="329726.AM1_1796"/>
<dbReference type="KEGG" id="amr:AM1_1796"/>
<dbReference type="eggNOG" id="COG0049">
    <property type="taxonomic scope" value="Bacteria"/>
</dbReference>
<dbReference type="HOGENOM" id="CLU_072226_1_1_3"/>
<dbReference type="OrthoDB" id="9807653at2"/>
<dbReference type="Proteomes" id="UP000000268">
    <property type="component" value="Chromosome"/>
</dbReference>
<dbReference type="GO" id="GO:0015935">
    <property type="term" value="C:small ribosomal subunit"/>
    <property type="evidence" value="ECO:0007669"/>
    <property type="project" value="InterPro"/>
</dbReference>
<dbReference type="GO" id="GO:0019843">
    <property type="term" value="F:rRNA binding"/>
    <property type="evidence" value="ECO:0007669"/>
    <property type="project" value="UniProtKB-UniRule"/>
</dbReference>
<dbReference type="GO" id="GO:0003735">
    <property type="term" value="F:structural constituent of ribosome"/>
    <property type="evidence" value="ECO:0007669"/>
    <property type="project" value="InterPro"/>
</dbReference>
<dbReference type="GO" id="GO:0000049">
    <property type="term" value="F:tRNA binding"/>
    <property type="evidence" value="ECO:0007669"/>
    <property type="project" value="UniProtKB-UniRule"/>
</dbReference>
<dbReference type="GO" id="GO:0006412">
    <property type="term" value="P:translation"/>
    <property type="evidence" value="ECO:0007669"/>
    <property type="project" value="UniProtKB-UniRule"/>
</dbReference>
<dbReference type="CDD" id="cd14871">
    <property type="entry name" value="uS7_Chloroplast"/>
    <property type="match status" value="1"/>
</dbReference>
<dbReference type="FunFam" id="1.10.455.10:FF:000001">
    <property type="entry name" value="30S ribosomal protein S7"/>
    <property type="match status" value="1"/>
</dbReference>
<dbReference type="Gene3D" id="1.10.455.10">
    <property type="entry name" value="Ribosomal protein S7 domain"/>
    <property type="match status" value="1"/>
</dbReference>
<dbReference type="HAMAP" id="MF_00480_B">
    <property type="entry name" value="Ribosomal_uS7_B"/>
    <property type="match status" value="1"/>
</dbReference>
<dbReference type="InterPro" id="IPR000235">
    <property type="entry name" value="Ribosomal_uS7"/>
</dbReference>
<dbReference type="InterPro" id="IPR005717">
    <property type="entry name" value="Ribosomal_uS7_bac/org-type"/>
</dbReference>
<dbReference type="InterPro" id="IPR020606">
    <property type="entry name" value="Ribosomal_uS7_CS"/>
</dbReference>
<dbReference type="InterPro" id="IPR023798">
    <property type="entry name" value="Ribosomal_uS7_dom"/>
</dbReference>
<dbReference type="InterPro" id="IPR036823">
    <property type="entry name" value="Ribosomal_uS7_dom_sf"/>
</dbReference>
<dbReference type="NCBIfam" id="TIGR01029">
    <property type="entry name" value="rpsG_bact"/>
    <property type="match status" value="1"/>
</dbReference>
<dbReference type="PANTHER" id="PTHR11205">
    <property type="entry name" value="RIBOSOMAL PROTEIN S7"/>
    <property type="match status" value="1"/>
</dbReference>
<dbReference type="Pfam" id="PF00177">
    <property type="entry name" value="Ribosomal_S7"/>
    <property type="match status" value="1"/>
</dbReference>
<dbReference type="PIRSF" id="PIRSF002122">
    <property type="entry name" value="RPS7p_RPS7a_RPS5e_RPS7o"/>
    <property type="match status" value="1"/>
</dbReference>
<dbReference type="SUPFAM" id="SSF47973">
    <property type="entry name" value="Ribosomal protein S7"/>
    <property type="match status" value="1"/>
</dbReference>
<dbReference type="PROSITE" id="PS00052">
    <property type="entry name" value="RIBOSOMAL_S7"/>
    <property type="match status" value="1"/>
</dbReference>
<sequence length="156" mass="17891">MSRRIRAQKRPVPPDPVYNSRLISMTIRRLMASGKKSLASRILYDALKIIEERTNQDPLEVFETAVRNVTPLVEVKARRVGGATYQVPMEVRSDRGIALALRWIIRFSRQRPGRSMVSKLANELIDAANETGAAIRKREETHRMAEANKAFAHYRY</sequence>
<gene>
    <name evidence="1" type="primary">rpsG</name>
    <name evidence="1" type="synonym">rps7</name>
    <name type="ordered locus">AM1_1796</name>
</gene>
<name>RS7_ACAM1</name>
<organism>
    <name type="scientific">Acaryochloris marina (strain MBIC 11017)</name>
    <dbReference type="NCBI Taxonomy" id="329726"/>
    <lineage>
        <taxon>Bacteria</taxon>
        <taxon>Bacillati</taxon>
        <taxon>Cyanobacteriota</taxon>
        <taxon>Cyanophyceae</taxon>
        <taxon>Acaryochloridales</taxon>
        <taxon>Acaryochloridaceae</taxon>
        <taxon>Acaryochloris</taxon>
    </lineage>
</organism>
<comment type="function">
    <text evidence="1">One of the primary rRNA binding proteins, it binds directly to 16S rRNA where it nucleates assembly of the head domain of the 30S subunit. Is located at the subunit interface close to the decoding center, probably blocks exit of the E-site tRNA.</text>
</comment>
<comment type="subunit">
    <text evidence="1">Part of the 30S ribosomal subunit. Contacts proteins S9 and S11.</text>
</comment>
<comment type="similarity">
    <text evidence="1">Belongs to the universal ribosomal protein uS7 family.</text>
</comment>
<accession>B0CCD2</accession>